<evidence type="ECO:0000250" key="1"/>
<evidence type="ECO:0000255" key="2"/>
<evidence type="ECO:0000269" key="3">
    <source>
    </source>
</evidence>
<evidence type="ECO:0000305" key="4"/>
<proteinExistence type="evidence at transcript level"/>
<keyword id="KW-0165">Cleavage on pair of basic residues</keyword>
<keyword id="KW-0202">Cytokine</keyword>
<keyword id="KW-1015">Disulfide bond</keyword>
<keyword id="KW-0325">Glycoprotein</keyword>
<keyword id="KW-0339">Growth factor</keyword>
<keyword id="KW-0597">Phosphoprotein</keyword>
<keyword id="KW-1185">Reference proteome</keyword>
<keyword id="KW-0964">Secreted</keyword>
<keyword id="KW-0732">Signal</keyword>
<protein>
    <recommendedName>
        <fullName>Growth/differentiation factor 9</fullName>
        <shortName>GDF-9</shortName>
    </recommendedName>
</protein>
<gene>
    <name type="primary">Gdf9</name>
    <name type="synonym">Gdf-9</name>
</gene>
<sequence length="441" mass="49649">MALPSNFLLGVCCFAWLCFLSSLSSQASTEESQSGASENVESEADPWSLLLPVDGTDRSGLLPPLFKVLSDRRGETPKLQPDSRALYYMKKLYKTYATKEGVPKPSRSHLYNTVRLFSPCAQQEQAPSNQVTGPLPMVDLLFNLDRVTAMEHLLKSVLLYTLNNSASSSSTVTCMCDLVVKEAMSSGRAPPRAPYSFTLKKHRWIEIDVTSLLQPLVTSSERSIHLSVNFTCTKDQVPEDGVFSMPLSVPPSLILYLNDTSTQAYHSWQSLQSTWRPLQHPGQAGVAARPVKEEAIEVERSPRRRRGQKAIRSEAKGPLLTASFNLSEYFKQFLFPQNECELHDFRLSFSQLKWDNWIVAPHRYNPRYCKGDCPRAVRHRYGSPVHTMVQNIIYEKLDPSVPRPSCVPGKYSPLSVLTIEPDGSIAYKEYEDMIATRCTCR</sequence>
<accession>Q07105</accession>
<feature type="signal peptide" evidence="2">
    <location>
        <begin position="1"/>
        <end position="29"/>
    </location>
</feature>
<feature type="propeptide" id="PRO_0000033982" evidence="2">
    <location>
        <begin position="30"/>
        <end position="306"/>
    </location>
</feature>
<feature type="chain" id="PRO_0000033983" description="Growth/differentiation factor 9">
    <location>
        <begin position="307"/>
        <end position="441"/>
    </location>
</feature>
<feature type="glycosylation site" description="N-linked (GlcNAc...) asparagine" evidence="2">
    <location>
        <position position="163"/>
    </location>
</feature>
<feature type="glycosylation site" description="N-linked (GlcNAc...) asparagine" evidence="2">
    <location>
        <position position="229"/>
    </location>
</feature>
<feature type="glycosylation site" description="N-linked (GlcNAc...) asparagine" evidence="2">
    <location>
        <position position="258"/>
    </location>
</feature>
<feature type="glycosylation site" description="N-linked (GlcNAc...) asparagine" evidence="2">
    <location>
        <position position="325"/>
    </location>
</feature>
<feature type="disulfide bond" evidence="1">
    <location>
        <begin position="340"/>
        <end position="406"/>
    </location>
</feature>
<feature type="disulfide bond" evidence="1">
    <location>
        <begin position="369"/>
        <end position="438"/>
    </location>
</feature>
<feature type="disulfide bond" evidence="1">
    <location>
        <begin position="373"/>
        <end position="440"/>
    </location>
</feature>
<feature type="sequence conflict" description="In Ref. 1; AAA53035." evidence="4" ref="1">
    <original>I</original>
    <variation>T</variation>
    <location>
        <position position="296"/>
    </location>
</feature>
<comment type="function">
    <text>Required for ovarian folliculogenesis.</text>
</comment>
<comment type="subunit">
    <text evidence="4">Homodimer or heterodimer (Potential). But, in contrast to other members of this family, cannot be disulfide-linked.</text>
</comment>
<comment type="subcellular location">
    <subcellularLocation>
        <location evidence="1">Secreted</location>
    </subcellularLocation>
</comment>
<comment type="tissue specificity">
    <text evidence="3">Ovary. Strongly expressed in germinal vesicle (GV) stage oocytes, MII-stage oocytes and in zygotes (PubMed:24357321).</text>
</comment>
<comment type="PTM">
    <text evidence="1">Phosphorylated; phosphorylation is critical for GDF9 function.</text>
</comment>
<comment type="miscellaneous">
    <text>Ovarian physiology and fertility are controlled by endocrine and paracrine signals. These act in a species-dependent manner and determine the ovulation quota in different mammalian species. While humans, and mammals such as the cow or red deer, normally ovulate only one egg per cycle, other mammals such as mouse and pig can ovulate in excess of ten per cycle. The mechanisms that regulate the species-specific differences in the number of follicles that go onto ovulate during each reproductive cycle are poorly understood. According to PubMed:21970812, mRNA expression levels of GDF9 and BMP15 are tightly coregulated within each species and influence species-specific ovulation-rates.</text>
</comment>
<comment type="similarity">
    <text evidence="4">Belongs to the TGF-beta family.</text>
</comment>
<dbReference type="EMBL" id="L06444">
    <property type="protein sequence ID" value="AAA53035.1"/>
    <property type="molecule type" value="mRNA"/>
</dbReference>
<dbReference type="EMBL" id="X77112">
    <property type="status" value="NOT_ANNOTATED_CDS"/>
    <property type="molecule type" value="Genomic_DNA"/>
</dbReference>
<dbReference type="EMBL" id="X77113">
    <property type="status" value="NOT_ANNOTATED_CDS"/>
    <property type="molecule type" value="Genomic_DNA"/>
</dbReference>
<dbReference type="CCDS" id="CCDS24679.1"/>
<dbReference type="PIR" id="S45284">
    <property type="entry name" value="S45284"/>
</dbReference>
<dbReference type="RefSeq" id="NP_032136.2">
    <property type="nucleotide sequence ID" value="NM_008110.2"/>
</dbReference>
<dbReference type="RefSeq" id="XP_030101430.1">
    <property type="nucleotide sequence ID" value="XM_030245570.2"/>
</dbReference>
<dbReference type="FunCoup" id="Q07105">
    <property type="interactions" value="495"/>
</dbReference>
<dbReference type="IntAct" id="Q07105">
    <property type="interactions" value="1"/>
</dbReference>
<dbReference type="STRING" id="10090.ENSMUSP00000018382"/>
<dbReference type="GlyCosmos" id="Q07105">
    <property type="glycosylation" value="4 sites, No reported glycans"/>
</dbReference>
<dbReference type="GlyGen" id="Q07105">
    <property type="glycosylation" value="4 sites"/>
</dbReference>
<dbReference type="iPTMnet" id="Q07105"/>
<dbReference type="PhosphoSitePlus" id="Q07105"/>
<dbReference type="PaxDb" id="10090-ENSMUSP00000018382"/>
<dbReference type="Antibodypedia" id="26178">
    <property type="antibodies" value="559 antibodies from 33 providers"/>
</dbReference>
<dbReference type="DNASU" id="14566"/>
<dbReference type="Ensembl" id="ENSMUST00000018382.7">
    <property type="protein sequence ID" value="ENSMUSP00000018382.7"/>
    <property type="gene ID" value="ENSMUSG00000018238.7"/>
</dbReference>
<dbReference type="GeneID" id="14566"/>
<dbReference type="KEGG" id="mmu:14566"/>
<dbReference type="UCSC" id="uc007iwa.2">
    <property type="organism name" value="mouse"/>
</dbReference>
<dbReference type="AGR" id="MGI:95692"/>
<dbReference type="CTD" id="2661"/>
<dbReference type="MGI" id="MGI:95692">
    <property type="gene designation" value="Gdf9"/>
</dbReference>
<dbReference type="VEuPathDB" id="HostDB:ENSMUSG00000018238"/>
<dbReference type="eggNOG" id="KOG3900">
    <property type="taxonomic scope" value="Eukaryota"/>
</dbReference>
<dbReference type="GeneTree" id="ENSGT00940000159784"/>
<dbReference type="HOGENOM" id="CLU_055377_1_0_1"/>
<dbReference type="InParanoid" id="Q07105"/>
<dbReference type="OMA" id="TWRICVC"/>
<dbReference type="OrthoDB" id="6427922at2759"/>
<dbReference type="PhylomeDB" id="Q07105"/>
<dbReference type="TreeFam" id="TF351788"/>
<dbReference type="BioGRID-ORCS" id="14566">
    <property type="hits" value="0 hits in 77 CRISPR screens"/>
</dbReference>
<dbReference type="ChiTaRS" id="Gdf9">
    <property type="organism name" value="mouse"/>
</dbReference>
<dbReference type="PRO" id="PR:Q07105"/>
<dbReference type="Proteomes" id="UP000000589">
    <property type="component" value="Chromosome 11"/>
</dbReference>
<dbReference type="RNAct" id="Q07105">
    <property type="molecule type" value="protein"/>
</dbReference>
<dbReference type="Bgee" id="ENSMUSG00000018238">
    <property type="expression patterns" value="Expressed in secondary oocyte and 72 other cell types or tissues"/>
</dbReference>
<dbReference type="ExpressionAtlas" id="Q07105">
    <property type="expression patterns" value="baseline and differential"/>
</dbReference>
<dbReference type="GO" id="GO:0005737">
    <property type="term" value="C:cytoplasm"/>
    <property type="evidence" value="ECO:0000314"/>
    <property type="project" value="MGI"/>
</dbReference>
<dbReference type="GO" id="GO:0005615">
    <property type="term" value="C:extracellular space"/>
    <property type="evidence" value="ECO:0007669"/>
    <property type="project" value="UniProtKB-KW"/>
</dbReference>
<dbReference type="GO" id="GO:0005125">
    <property type="term" value="F:cytokine activity"/>
    <property type="evidence" value="ECO:0007669"/>
    <property type="project" value="UniProtKB-KW"/>
</dbReference>
<dbReference type="GO" id="GO:0008083">
    <property type="term" value="F:growth factor activity"/>
    <property type="evidence" value="ECO:0007669"/>
    <property type="project" value="UniProtKB-KW"/>
</dbReference>
<dbReference type="GO" id="GO:0030308">
    <property type="term" value="P:negative regulation of cell growth"/>
    <property type="evidence" value="ECO:0000315"/>
    <property type="project" value="MGI"/>
</dbReference>
<dbReference type="GO" id="GO:0001555">
    <property type="term" value="P:oocyte growth"/>
    <property type="evidence" value="ECO:0000315"/>
    <property type="project" value="MGI"/>
</dbReference>
<dbReference type="GO" id="GO:0008284">
    <property type="term" value="P:positive regulation of cell population proliferation"/>
    <property type="evidence" value="ECO:0007669"/>
    <property type="project" value="Ensembl"/>
</dbReference>
<dbReference type="GO" id="GO:2000870">
    <property type="term" value="P:regulation of progesterone secretion"/>
    <property type="evidence" value="ECO:0007669"/>
    <property type="project" value="Ensembl"/>
</dbReference>
<dbReference type="CDD" id="cd19403">
    <property type="entry name" value="TGF_beta_GDF9"/>
    <property type="match status" value="1"/>
</dbReference>
<dbReference type="FunFam" id="2.10.90.10:FF:000012">
    <property type="entry name" value="Growth/differentiation factor 9 (Predicted)"/>
    <property type="match status" value="1"/>
</dbReference>
<dbReference type="Gene3D" id="2.10.90.10">
    <property type="entry name" value="Cystine-knot cytokines"/>
    <property type="match status" value="1"/>
</dbReference>
<dbReference type="InterPro" id="IPR029034">
    <property type="entry name" value="Cystine-knot_cytokine"/>
</dbReference>
<dbReference type="InterPro" id="IPR015617">
    <property type="entry name" value="Growth_differentiation_fac-9_C"/>
</dbReference>
<dbReference type="InterPro" id="IPR001839">
    <property type="entry name" value="TGF-b_C"/>
</dbReference>
<dbReference type="InterPro" id="IPR015615">
    <property type="entry name" value="TGF-beta-rel"/>
</dbReference>
<dbReference type="InterPro" id="IPR017948">
    <property type="entry name" value="TGFb_CS"/>
</dbReference>
<dbReference type="PANTHER" id="PTHR11848:SF19">
    <property type="entry name" value="GROWTH_DIFFERENTIATION FACTOR 9"/>
    <property type="match status" value="1"/>
</dbReference>
<dbReference type="PANTHER" id="PTHR11848">
    <property type="entry name" value="TGF-BETA FAMILY"/>
    <property type="match status" value="1"/>
</dbReference>
<dbReference type="Pfam" id="PF00019">
    <property type="entry name" value="TGF_beta"/>
    <property type="match status" value="1"/>
</dbReference>
<dbReference type="SMART" id="SM00204">
    <property type="entry name" value="TGFB"/>
    <property type="match status" value="1"/>
</dbReference>
<dbReference type="SUPFAM" id="SSF57501">
    <property type="entry name" value="Cystine-knot cytokines"/>
    <property type="match status" value="1"/>
</dbReference>
<dbReference type="PROSITE" id="PS00250">
    <property type="entry name" value="TGF_BETA_1"/>
    <property type="match status" value="1"/>
</dbReference>
<dbReference type="PROSITE" id="PS51362">
    <property type="entry name" value="TGF_BETA_2"/>
    <property type="match status" value="1"/>
</dbReference>
<reference key="1">
    <citation type="journal article" date="1993" name="J. Biol. Chem.">
        <title>GDF-3 and GDF-9: two new members of the transforming growth factor-beta superfamily containing a novel pattern of cysteines.</title>
        <authorList>
            <person name="McPherron A.C."/>
            <person name="Lee S.-J."/>
        </authorList>
    </citation>
    <scope>NUCLEOTIDE SEQUENCE [MRNA]</scope>
</reference>
<reference key="2">
    <citation type="journal article" date="1994" name="Biochim. Biophys. Acta">
        <title>Structure of the mouse growth/differentiation factor 9 gene.</title>
        <authorList>
            <person name="Incerti B."/>
            <person name="Dong J."/>
            <person name="Borsani G."/>
            <person name="Matzuk M.M."/>
        </authorList>
    </citation>
    <scope>NUCLEOTIDE SEQUENCE [GENOMIC DNA]</scope>
    <source>
        <strain>129/SvEv</strain>
    </source>
</reference>
<reference key="3">
    <citation type="journal article" date="2012" name="Mol. Cell. Endocrinol.">
        <title>The ratio of growth differentiation factor 9: bone morphogenetic protein 15 mRNA expression is tightly co-regulated and differs between species over a wide range of ovulation rates.</title>
        <authorList>
            <person name="Crawford J.L."/>
            <person name="McNatty K.P."/>
        </authorList>
    </citation>
    <scope>SPECIES-SPECIFIC OVULATION RATE DETERMINATION</scope>
</reference>
<reference key="4">
    <citation type="journal article" date="2013" name="Science">
        <title>CRL4 complex regulates mammalian oocyte survival and reprogramming by activation of TET proteins.</title>
        <authorList>
            <person name="Yu C."/>
            <person name="Zhang Y.L."/>
            <person name="Pan W.W."/>
            <person name="Li X.M."/>
            <person name="Wang Z.W."/>
            <person name="Ge Z.J."/>
            <person name="Zhou J.J."/>
            <person name="Cang Y."/>
            <person name="Tong C."/>
            <person name="Sun Q.Y."/>
            <person name="Fan H.Y."/>
        </authorList>
    </citation>
    <scope>TISSUE SPECIFICITY</scope>
</reference>
<name>GDF9_MOUSE</name>
<organism>
    <name type="scientific">Mus musculus</name>
    <name type="common">Mouse</name>
    <dbReference type="NCBI Taxonomy" id="10090"/>
    <lineage>
        <taxon>Eukaryota</taxon>
        <taxon>Metazoa</taxon>
        <taxon>Chordata</taxon>
        <taxon>Craniata</taxon>
        <taxon>Vertebrata</taxon>
        <taxon>Euteleostomi</taxon>
        <taxon>Mammalia</taxon>
        <taxon>Eutheria</taxon>
        <taxon>Euarchontoglires</taxon>
        <taxon>Glires</taxon>
        <taxon>Rodentia</taxon>
        <taxon>Myomorpha</taxon>
        <taxon>Muroidea</taxon>
        <taxon>Muridae</taxon>
        <taxon>Murinae</taxon>
        <taxon>Mus</taxon>
        <taxon>Mus</taxon>
    </lineage>
</organism>